<keyword id="KW-0687">Ribonucleoprotein</keyword>
<keyword id="KW-0689">Ribosomal protein</keyword>
<keyword id="KW-0694">RNA-binding</keyword>
<keyword id="KW-0699">rRNA-binding</keyword>
<accession>Q3Z971</accession>
<sequence>MVQQYTRLNVADNTGAKKIMCINVLGGSRKLQAKVGDVIVAAVKKSSPDAQAKSGTVVKAVVVRITKPYARPDGSYIKFDDNAAVILNDKMEPKGTRIFGPVARELRDKKFTKILSLAPEVL</sequence>
<gene>
    <name evidence="1" type="primary">rplN</name>
    <name type="ordered locus">DET0484</name>
</gene>
<name>RL14_DEHM1</name>
<protein>
    <recommendedName>
        <fullName evidence="1">Large ribosomal subunit protein uL14</fullName>
    </recommendedName>
    <alternativeName>
        <fullName evidence="2">50S ribosomal protein L14</fullName>
    </alternativeName>
</protein>
<reference key="1">
    <citation type="journal article" date="2005" name="Science">
        <title>Genome sequence of the PCE-dechlorinating bacterium Dehalococcoides ethenogenes.</title>
        <authorList>
            <person name="Seshadri R."/>
            <person name="Adrian L."/>
            <person name="Fouts D.E."/>
            <person name="Eisen J.A."/>
            <person name="Phillippy A.M."/>
            <person name="Methe B.A."/>
            <person name="Ward N.L."/>
            <person name="Nelson W.C."/>
            <person name="DeBoy R.T."/>
            <person name="Khouri H.M."/>
            <person name="Kolonay J.F."/>
            <person name="Dodson R.J."/>
            <person name="Daugherty S.C."/>
            <person name="Brinkac L.M."/>
            <person name="Sullivan S.A."/>
            <person name="Madupu R."/>
            <person name="Nelson K.E."/>
            <person name="Kang K.H."/>
            <person name="Impraim M."/>
            <person name="Tran K."/>
            <person name="Robinson J.M."/>
            <person name="Forberger H.A."/>
            <person name="Fraser C.M."/>
            <person name="Zinder S.H."/>
            <person name="Heidelberg J.F."/>
        </authorList>
    </citation>
    <scope>NUCLEOTIDE SEQUENCE [LARGE SCALE GENOMIC DNA]</scope>
    <source>
        <strain>ATCC BAA-2266 / KCTC 15142 / 195</strain>
    </source>
</reference>
<feature type="chain" id="PRO_0000266476" description="Large ribosomal subunit protein uL14">
    <location>
        <begin position="1"/>
        <end position="122"/>
    </location>
</feature>
<comment type="function">
    <text evidence="1">Binds to 23S rRNA. Forms part of two intersubunit bridges in the 70S ribosome.</text>
</comment>
<comment type="subunit">
    <text evidence="1">Part of the 50S ribosomal subunit. Forms a cluster with proteins L3 and L19. In the 70S ribosome, L14 and L19 interact and together make contacts with the 16S rRNA in bridges B5 and B8.</text>
</comment>
<comment type="similarity">
    <text evidence="1">Belongs to the universal ribosomal protein uL14 family.</text>
</comment>
<evidence type="ECO:0000255" key="1">
    <source>
        <dbReference type="HAMAP-Rule" id="MF_01367"/>
    </source>
</evidence>
<evidence type="ECO:0000305" key="2"/>
<dbReference type="EMBL" id="CP000027">
    <property type="protein sequence ID" value="AAW40173.1"/>
    <property type="molecule type" value="Genomic_DNA"/>
</dbReference>
<dbReference type="RefSeq" id="WP_010936261.1">
    <property type="nucleotide sequence ID" value="NC_002936.3"/>
</dbReference>
<dbReference type="SMR" id="Q3Z971"/>
<dbReference type="FunCoup" id="Q3Z971">
    <property type="interactions" value="339"/>
</dbReference>
<dbReference type="STRING" id="243164.DET0484"/>
<dbReference type="GeneID" id="3230137"/>
<dbReference type="KEGG" id="det:DET0484"/>
<dbReference type="eggNOG" id="COG0093">
    <property type="taxonomic scope" value="Bacteria"/>
</dbReference>
<dbReference type="HOGENOM" id="CLU_095071_2_1_0"/>
<dbReference type="InParanoid" id="Q3Z971"/>
<dbReference type="Proteomes" id="UP000008289">
    <property type="component" value="Chromosome"/>
</dbReference>
<dbReference type="GO" id="GO:0022625">
    <property type="term" value="C:cytosolic large ribosomal subunit"/>
    <property type="evidence" value="ECO:0007669"/>
    <property type="project" value="TreeGrafter"/>
</dbReference>
<dbReference type="GO" id="GO:0070180">
    <property type="term" value="F:large ribosomal subunit rRNA binding"/>
    <property type="evidence" value="ECO:0007669"/>
    <property type="project" value="TreeGrafter"/>
</dbReference>
<dbReference type="GO" id="GO:0003735">
    <property type="term" value="F:structural constituent of ribosome"/>
    <property type="evidence" value="ECO:0007669"/>
    <property type="project" value="InterPro"/>
</dbReference>
<dbReference type="GO" id="GO:0006412">
    <property type="term" value="P:translation"/>
    <property type="evidence" value="ECO:0007669"/>
    <property type="project" value="UniProtKB-UniRule"/>
</dbReference>
<dbReference type="CDD" id="cd00337">
    <property type="entry name" value="Ribosomal_uL14"/>
    <property type="match status" value="1"/>
</dbReference>
<dbReference type="FunFam" id="2.40.150.20:FF:000001">
    <property type="entry name" value="50S ribosomal protein L14"/>
    <property type="match status" value="1"/>
</dbReference>
<dbReference type="Gene3D" id="2.40.150.20">
    <property type="entry name" value="Ribosomal protein L14"/>
    <property type="match status" value="1"/>
</dbReference>
<dbReference type="HAMAP" id="MF_01367">
    <property type="entry name" value="Ribosomal_uL14"/>
    <property type="match status" value="1"/>
</dbReference>
<dbReference type="InterPro" id="IPR000218">
    <property type="entry name" value="Ribosomal_uL14"/>
</dbReference>
<dbReference type="InterPro" id="IPR005745">
    <property type="entry name" value="Ribosomal_uL14_bac-type"/>
</dbReference>
<dbReference type="InterPro" id="IPR019972">
    <property type="entry name" value="Ribosomal_uL14_CS"/>
</dbReference>
<dbReference type="InterPro" id="IPR036853">
    <property type="entry name" value="Ribosomal_uL14_sf"/>
</dbReference>
<dbReference type="NCBIfam" id="TIGR01067">
    <property type="entry name" value="rplN_bact"/>
    <property type="match status" value="1"/>
</dbReference>
<dbReference type="PANTHER" id="PTHR11761">
    <property type="entry name" value="50S/60S RIBOSOMAL PROTEIN L14/L23"/>
    <property type="match status" value="1"/>
</dbReference>
<dbReference type="PANTHER" id="PTHR11761:SF3">
    <property type="entry name" value="LARGE RIBOSOMAL SUBUNIT PROTEIN UL14M"/>
    <property type="match status" value="1"/>
</dbReference>
<dbReference type="Pfam" id="PF00238">
    <property type="entry name" value="Ribosomal_L14"/>
    <property type="match status" value="1"/>
</dbReference>
<dbReference type="SMART" id="SM01374">
    <property type="entry name" value="Ribosomal_L14"/>
    <property type="match status" value="1"/>
</dbReference>
<dbReference type="SUPFAM" id="SSF50193">
    <property type="entry name" value="Ribosomal protein L14"/>
    <property type="match status" value="1"/>
</dbReference>
<dbReference type="PROSITE" id="PS00049">
    <property type="entry name" value="RIBOSOMAL_L14"/>
    <property type="match status" value="1"/>
</dbReference>
<proteinExistence type="inferred from homology"/>
<organism>
    <name type="scientific">Dehalococcoides mccartyi (strain ATCC BAA-2266 / KCTC 15142 / 195)</name>
    <name type="common">Dehalococcoides ethenogenes (strain 195)</name>
    <dbReference type="NCBI Taxonomy" id="243164"/>
    <lineage>
        <taxon>Bacteria</taxon>
        <taxon>Bacillati</taxon>
        <taxon>Chloroflexota</taxon>
        <taxon>Dehalococcoidia</taxon>
        <taxon>Dehalococcoidales</taxon>
        <taxon>Dehalococcoidaceae</taxon>
        <taxon>Dehalococcoides</taxon>
    </lineage>
</organism>